<gene>
    <name evidence="1" type="primary">apt</name>
    <name type="ordered locus">Asuc_0970</name>
</gene>
<reference key="1">
    <citation type="journal article" date="2010" name="BMC Genomics">
        <title>A genomic perspective on the potential of Actinobacillus succinogenes for industrial succinate production.</title>
        <authorList>
            <person name="McKinlay J.B."/>
            <person name="Laivenieks M."/>
            <person name="Schindler B.D."/>
            <person name="McKinlay A.A."/>
            <person name="Siddaramappa S."/>
            <person name="Challacombe J.F."/>
            <person name="Lowry S.R."/>
            <person name="Clum A."/>
            <person name="Lapidus A.L."/>
            <person name="Burkhart K.B."/>
            <person name="Harkins V."/>
            <person name="Vieille C."/>
        </authorList>
    </citation>
    <scope>NUCLEOTIDE SEQUENCE [LARGE SCALE GENOMIC DNA]</scope>
    <source>
        <strain>ATCC 55618 / DSM 22257 / CCUG 43843 / 130Z</strain>
    </source>
</reference>
<accession>A6VMZ1</accession>
<organism>
    <name type="scientific">Actinobacillus succinogenes (strain ATCC 55618 / DSM 22257 / CCUG 43843 / 130Z)</name>
    <dbReference type="NCBI Taxonomy" id="339671"/>
    <lineage>
        <taxon>Bacteria</taxon>
        <taxon>Pseudomonadati</taxon>
        <taxon>Pseudomonadota</taxon>
        <taxon>Gammaproteobacteria</taxon>
        <taxon>Pasteurellales</taxon>
        <taxon>Pasteurellaceae</taxon>
        <taxon>Actinobacillus</taxon>
    </lineage>
</organism>
<feature type="chain" id="PRO_0000321332" description="Adenine phosphoribosyltransferase">
    <location>
        <begin position="1"/>
        <end position="180"/>
    </location>
</feature>
<proteinExistence type="inferred from homology"/>
<comment type="function">
    <text evidence="1">Catalyzes a salvage reaction resulting in the formation of AMP, that is energically less costly than de novo synthesis.</text>
</comment>
<comment type="catalytic activity">
    <reaction evidence="1">
        <text>AMP + diphosphate = 5-phospho-alpha-D-ribose 1-diphosphate + adenine</text>
        <dbReference type="Rhea" id="RHEA:16609"/>
        <dbReference type="ChEBI" id="CHEBI:16708"/>
        <dbReference type="ChEBI" id="CHEBI:33019"/>
        <dbReference type="ChEBI" id="CHEBI:58017"/>
        <dbReference type="ChEBI" id="CHEBI:456215"/>
        <dbReference type="EC" id="2.4.2.7"/>
    </reaction>
</comment>
<comment type="pathway">
    <text evidence="1">Purine metabolism; AMP biosynthesis via salvage pathway; AMP from adenine: step 1/1.</text>
</comment>
<comment type="subunit">
    <text evidence="1">Homodimer.</text>
</comment>
<comment type="subcellular location">
    <subcellularLocation>
        <location evidence="1">Cytoplasm</location>
    </subcellularLocation>
</comment>
<comment type="similarity">
    <text evidence="1">Belongs to the purine/pyrimidine phosphoribosyltransferase family.</text>
</comment>
<keyword id="KW-0963">Cytoplasm</keyword>
<keyword id="KW-0328">Glycosyltransferase</keyword>
<keyword id="KW-0660">Purine salvage</keyword>
<keyword id="KW-1185">Reference proteome</keyword>
<keyword id="KW-0808">Transferase</keyword>
<sequence>MNKQLDLIKSSIKSIPNYPKEGIIFRDITSLTEIPEAFTATVNLIAEAFRHKGITKIIGTESRGFIFGAPVAVALGLPFILVRKPGKLPREVISQSYQLEYGEDKLEIHADAIQKGDNVLVIDDLLATGGTVEACIKLVNRLGGDVKHAAFVINLPDLGGGERLRKQGVEPFTLVDFAGH</sequence>
<dbReference type="EC" id="2.4.2.7" evidence="1"/>
<dbReference type="EMBL" id="CP000746">
    <property type="protein sequence ID" value="ABR74338.1"/>
    <property type="molecule type" value="Genomic_DNA"/>
</dbReference>
<dbReference type="RefSeq" id="WP_012072715.1">
    <property type="nucleotide sequence ID" value="NC_009655.1"/>
</dbReference>
<dbReference type="SMR" id="A6VMZ1"/>
<dbReference type="STRING" id="339671.Asuc_0970"/>
<dbReference type="KEGG" id="asu:Asuc_0970"/>
<dbReference type="eggNOG" id="COG0503">
    <property type="taxonomic scope" value="Bacteria"/>
</dbReference>
<dbReference type="HOGENOM" id="CLU_063339_3_0_6"/>
<dbReference type="OrthoDB" id="9803963at2"/>
<dbReference type="UniPathway" id="UPA00588">
    <property type="reaction ID" value="UER00646"/>
</dbReference>
<dbReference type="Proteomes" id="UP000001114">
    <property type="component" value="Chromosome"/>
</dbReference>
<dbReference type="GO" id="GO:0005829">
    <property type="term" value="C:cytosol"/>
    <property type="evidence" value="ECO:0007669"/>
    <property type="project" value="TreeGrafter"/>
</dbReference>
<dbReference type="GO" id="GO:0003999">
    <property type="term" value="F:adenine phosphoribosyltransferase activity"/>
    <property type="evidence" value="ECO:0007669"/>
    <property type="project" value="UniProtKB-UniRule"/>
</dbReference>
<dbReference type="GO" id="GO:0006168">
    <property type="term" value="P:adenine salvage"/>
    <property type="evidence" value="ECO:0007669"/>
    <property type="project" value="InterPro"/>
</dbReference>
<dbReference type="GO" id="GO:0044209">
    <property type="term" value="P:AMP salvage"/>
    <property type="evidence" value="ECO:0007669"/>
    <property type="project" value="UniProtKB-UniRule"/>
</dbReference>
<dbReference type="GO" id="GO:0006166">
    <property type="term" value="P:purine ribonucleoside salvage"/>
    <property type="evidence" value="ECO:0007669"/>
    <property type="project" value="UniProtKB-KW"/>
</dbReference>
<dbReference type="CDD" id="cd06223">
    <property type="entry name" value="PRTases_typeI"/>
    <property type="match status" value="1"/>
</dbReference>
<dbReference type="FunFam" id="3.40.50.2020:FF:000004">
    <property type="entry name" value="Adenine phosphoribosyltransferase"/>
    <property type="match status" value="1"/>
</dbReference>
<dbReference type="Gene3D" id="3.40.50.2020">
    <property type="match status" value="1"/>
</dbReference>
<dbReference type="HAMAP" id="MF_00004">
    <property type="entry name" value="Aden_phosphoribosyltr"/>
    <property type="match status" value="1"/>
</dbReference>
<dbReference type="InterPro" id="IPR005764">
    <property type="entry name" value="Ade_phspho_trans"/>
</dbReference>
<dbReference type="InterPro" id="IPR050120">
    <property type="entry name" value="Adenine_PRTase"/>
</dbReference>
<dbReference type="InterPro" id="IPR000836">
    <property type="entry name" value="PRibTrfase_dom"/>
</dbReference>
<dbReference type="InterPro" id="IPR029057">
    <property type="entry name" value="PRTase-like"/>
</dbReference>
<dbReference type="NCBIfam" id="TIGR01090">
    <property type="entry name" value="apt"/>
    <property type="match status" value="1"/>
</dbReference>
<dbReference type="NCBIfam" id="NF002632">
    <property type="entry name" value="PRK02304.1-1"/>
    <property type="match status" value="1"/>
</dbReference>
<dbReference type="NCBIfam" id="NF002634">
    <property type="entry name" value="PRK02304.1-3"/>
    <property type="match status" value="1"/>
</dbReference>
<dbReference type="NCBIfam" id="NF002636">
    <property type="entry name" value="PRK02304.1-5"/>
    <property type="match status" value="1"/>
</dbReference>
<dbReference type="PANTHER" id="PTHR11776">
    <property type="entry name" value="ADENINE PHOSPHORIBOSYLTRANSFERASE"/>
    <property type="match status" value="1"/>
</dbReference>
<dbReference type="PANTHER" id="PTHR11776:SF7">
    <property type="entry name" value="PHOSPHORIBOSYLTRANSFERASE DOMAIN-CONTAINING PROTEIN"/>
    <property type="match status" value="1"/>
</dbReference>
<dbReference type="Pfam" id="PF00156">
    <property type="entry name" value="Pribosyltran"/>
    <property type="match status" value="1"/>
</dbReference>
<dbReference type="SUPFAM" id="SSF53271">
    <property type="entry name" value="PRTase-like"/>
    <property type="match status" value="1"/>
</dbReference>
<dbReference type="PROSITE" id="PS00103">
    <property type="entry name" value="PUR_PYR_PR_TRANSFER"/>
    <property type="match status" value="1"/>
</dbReference>
<evidence type="ECO:0000255" key="1">
    <source>
        <dbReference type="HAMAP-Rule" id="MF_00004"/>
    </source>
</evidence>
<name>APT_ACTSZ</name>
<protein>
    <recommendedName>
        <fullName evidence="1">Adenine phosphoribosyltransferase</fullName>
        <shortName evidence="1">APRT</shortName>
        <ecNumber evidence="1">2.4.2.7</ecNumber>
    </recommendedName>
</protein>